<keyword id="KW-0414">Isoprene biosynthesis</keyword>
<keyword id="KW-0456">Lyase</keyword>
<keyword id="KW-0479">Metal-binding</keyword>
<name>ISPF_BURCM</name>
<reference key="1">
    <citation type="submission" date="2006-08" db="EMBL/GenBank/DDBJ databases">
        <title>Complete sequence of chromosome 1 of Burkholderia cepacia AMMD.</title>
        <authorList>
            <person name="Copeland A."/>
            <person name="Lucas S."/>
            <person name="Lapidus A."/>
            <person name="Barry K."/>
            <person name="Detter J.C."/>
            <person name="Glavina del Rio T."/>
            <person name="Hammon N."/>
            <person name="Israni S."/>
            <person name="Pitluck S."/>
            <person name="Bruce D."/>
            <person name="Chain P."/>
            <person name="Malfatti S."/>
            <person name="Shin M."/>
            <person name="Vergez L."/>
            <person name="Schmutz J."/>
            <person name="Larimer F."/>
            <person name="Land M."/>
            <person name="Hauser L."/>
            <person name="Kyrpides N."/>
            <person name="Kim E."/>
            <person name="Parke J."/>
            <person name="Coenye T."/>
            <person name="Konstantinidis K."/>
            <person name="Ramette A."/>
            <person name="Tiedje J."/>
            <person name="Richardson P."/>
        </authorList>
    </citation>
    <scope>NUCLEOTIDE SEQUENCE [LARGE SCALE GENOMIC DNA]</scope>
    <source>
        <strain>ATCC BAA-244 / DSM 16087 / CCUG 44356 / LMG 19182 / AMMD</strain>
    </source>
</reference>
<dbReference type="EC" id="4.6.1.12" evidence="1"/>
<dbReference type="EMBL" id="CP000440">
    <property type="protein sequence ID" value="ABI87486.1"/>
    <property type="molecule type" value="Genomic_DNA"/>
</dbReference>
<dbReference type="RefSeq" id="WP_011657177.1">
    <property type="nucleotide sequence ID" value="NC_008390.1"/>
</dbReference>
<dbReference type="SMR" id="Q0BED7"/>
<dbReference type="GeneID" id="93085867"/>
<dbReference type="KEGG" id="bam:Bamb_1930"/>
<dbReference type="PATRIC" id="fig|339670.21.peg.3018"/>
<dbReference type="eggNOG" id="COG0245">
    <property type="taxonomic scope" value="Bacteria"/>
</dbReference>
<dbReference type="UniPathway" id="UPA00056">
    <property type="reaction ID" value="UER00095"/>
</dbReference>
<dbReference type="Proteomes" id="UP000000662">
    <property type="component" value="Chromosome 1"/>
</dbReference>
<dbReference type="GO" id="GO:0008685">
    <property type="term" value="F:2-C-methyl-D-erythritol 2,4-cyclodiphosphate synthase activity"/>
    <property type="evidence" value="ECO:0007669"/>
    <property type="project" value="UniProtKB-UniRule"/>
</dbReference>
<dbReference type="GO" id="GO:0046872">
    <property type="term" value="F:metal ion binding"/>
    <property type="evidence" value="ECO:0007669"/>
    <property type="project" value="UniProtKB-KW"/>
</dbReference>
<dbReference type="GO" id="GO:0019288">
    <property type="term" value="P:isopentenyl diphosphate biosynthetic process, methylerythritol 4-phosphate pathway"/>
    <property type="evidence" value="ECO:0007669"/>
    <property type="project" value="UniProtKB-UniRule"/>
</dbReference>
<dbReference type="GO" id="GO:0016114">
    <property type="term" value="P:terpenoid biosynthetic process"/>
    <property type="evidence" value="ECO:0007669"/>
    <property type="project" value="InterPro"/>
</dbReference>
<dbReference type="CDD" id="cd00554">
    <property type="entry name" value="MECDP_synthase"/>
    <property type="match status" value="1"/>
</dbReference>
<dbReference type="FunFam" id="3.30.1330.50:FF:000001">
    <property type="entry name" value="2-C-methyl-D-erythritol 2,4-cyclodiphosphate synthase"/>
    <property type="match status" value="1"/>
</dbReference>
<dbReference type="Gene3D" id="3.30.1330.50">
    <property type="entry name" value="2-C-methyl-D-erythritol 2,4-cyclodiphosphate synthase"/>
    <property type="match status" value="1"/>
</dbReference>
<dbReference type="HAMAP" id="MF_00107">
    <property type="entry name" value="IspF"/>
    <property type="match status" value="1"/>
</dbReference>
<dbReference type="InterPro" id="IPR003526">
    <property type="entry name" value="MECDP_synthase"/>
</dbReference>
<dbReference type="InterPro" id="IPR020555">
    <property type="entry name" value="MECDP_synthase_CS"/>
</dbReference>
<dbReference type="InterPro" id="IPR036571">
    <property type="entry name" value="MECDP_synthase_sf"/>
</dbReference>
<dbReference type="NCBIfam" id="TIGR00151">
    <property type="entry name" value="ispF"/>
    <property type="match status" value="1"/>
</dbReference>
<dbReference type="PANTHER" id="PTHR43181">
    <property type="entry name" value="2-C-METHYL-D-ERYTHRITOL 2,4-CYCLODIPHOSPHATE SYNTHASE, CHLOROPLASTIC"/>
    <property type="match status" value="1"/>
</dbReference>
<dbReference type="PANTHER" id="PTHR43181:SF1">
    <property type="entry name" value="2-C-METHYL-D-ERYTHRITOL 2,4-CYCLODIPHOSPHATE SYNTHASE, CHLOROPLASTIC"/>
    <property type="match status" value="1"/>
</dbReference>
<dbReference type="Pfam" id="PF02542">
    <property type="entry name" value="YgbB"/>
    <property type="match status" value="1"/>
</dbReference>
<dbReference type="SUPFAM" id="SSF69765">
    <property type="entry name" value="IpsF-like"/>
    <property type="match status" value="1"/>
</dbReference>
<dbReference type="PROSITE" id="PS01350">
    <property type="entry name" value="ISPF"/>
    <property type="match status" value="1"/>
</dbReference>
<comment type="function">
    <text evidence="1">Involved in the biosynthesis of isopentenyl diphosphate (IPP) and dimethylallyl diphosphate (DMAPP), two major building blocks of isoprenoid compounds. Catalyzes the conversion of 4-diphosphocytidyl-2-C-methyl-D-erythritol 2-phosphate (CDP-ME2P) to 2-C-methyl-D-erythritol 2,4-cyclodiphosphate (ME-CPP) with a corresponding release of cytidine 5-monophosphate (CMP).</text>
</comment>
<comment type="catalytic activity">
    <reaction evidence="1">
        <text>4-CDP-2-C-methyl-D-erythritol 2-phosphate = 2-C-methyl-D-erythritol 2,4-cyclic diphosphate + CMP</text>
        <dbReference type="Rhea" id="RHEA:23864"/>
        <dbReference type="ChEBI" id="CHEBI:57919"/>
        <dbReference type="ChEBI" id="CHEBI:58483"/>
        <dbReference type="ChEBI" id="CHEBI:60377"/>
        <dbReference type="EC" id="4.6.1.12"/>
    </reaction>
</comment>
<comment type="cofactor">
    <cofactor evidence="1">
        <name>a divalent metal cation</name>
        <dbReference type="ChEBI" id="CHEBI:60240"/>
    </cofactor>
    <text evidence="1">Binds 1 divalent metal cation per subunit.</text>
</comment>
<comment type="pathway">
    <text evidence="1">Isoprenoid biosynthesis; isopentenyl diphosphate biosynthesis via DXP pathway; isopentenyl diphosphate from 1-deoxy-D-xylulose 5-phosphate: step 4/6.</text>
</comment>
<comment type="subunit">
    <text evidence="1">Homotrimer.</text>
</comment>
<comment type="similarity">
    <text evidence="1">Belongs to the IspF family.</text>
</comment>
<proteinExistence type="inferred from homology"/>
<evidence type="ECO:0000255" key="1">
    <source>
        <dbReference type="HAMAP-Rule" id="MF_00107"/>
    </source>
</evidence>
<accession>Q0BED7</accession>
<sequence>MDFRIGQGYDVHQLVPGRPLIIGGVTIPYERGLLGHSDADVLLHAITDALFGAAALGDIGRHFSDTDAAFKGADSRVLLRECAARVKAAGFTIQNVDSTVIAQAPKLAPHIDGMRANIAADLGLPLDRVNVKAKTNEKLGYLGRGDGIEAQAAALLVKEGA</sequence>
<feature type="chain" id="PRO_1000022811" description="2-C-methyl-D-erythritol 2,4-cyclodiphosphate synthase">
    <location>
        <begin position="1"/>
        <end position="161"/>
    </location>
</feature>
<feature type="binding site" evidence="1">
    <location>
        <begin position="10"/>
        <end position="12"/>
    </location>
    <ligand>
        <name>4-CDP-2-C-methyl-D-erythritol 2-phosphate</name>
        <dbReference type="ChEBI" id="CHEBI:57919"/>
    </ligand>
</feature>
<feature type="binding site" evidence="1">
    <location>
        <position position="10"/>
    </location>
    <ligand>
        <name>a divalent metal cation</name>
        <dbReference type="ChEBI" id="CHEBI:60240"/>
    </ligand>
</feature>
<feature type="binding site" evidence="1">
    <location>
        <position position="12"/>
    </location>
    <ligand>
        <name>a divalent metal cation</name>
        <dbReference type="ChEBI" id="CHEBI:60240"/>
    </ligand>
</feature>
<feature type="binding site" evidence="1">
    <location>
        <begin position="36"/>
        <end position="37"/>
    </location>
    <ligand>
        <name>4-CDP-2-C-methyl-D-erythritol 2-phosphate</name>
        <dbReference type="ChEBI" id="CHEBI:57919"/>
    </ligand>
</feature>
<feature type="binding site" evidence="1">
    <location>
        <position position="44"/>
    </location>
    <ligand>
        <name>a divalent metal cation</name>
        <dbReference type="ChEBI" id="CHEBI:60240"/>
    </ligand>
</feature>
<feature type="binding site" evidence="1">
    <location>
        <begin position="58"/>
        <end position="60"/>
    </location>
    <ligand>
        <name>4-CDP-2-C-methyl-D-erythritol 2-phosphate</name>
        <dbReference type="ChEBI" id="CHEBI:57919"/>
    </ligand>
</feature>
<feature type="binding site" evidence="1">
    <location>
        <begin position="63"/>
        <end position="67"/>
    </location>
    <ligand>
        <name>4-CDP-2-C-methyl-D-erythritol 2-phosphate</name>
        <dbReference type="ChEBI" id="CHEBI:57919"/>
    </ligand>
</feature>
<feature type="binding site" evidence="1">
    <location>
        <position position="144"/>
    </location>
    <ligand>
        <name>4-CDP-2-C-methyl-D-erythritol 2-phosphate</name>
        <dbReference type="ChEBI" id="CHEBI:57919"/>
    </ligand>
</feature>
<feature type="site" description="Transition state stabilizer" evidence="1">
    <location>
        <position position="36"/>
    </location>
</feature>
<feature type="site" description="Transition state stabilizer" evidence="1">
    <location>
        <position position="135"/>
    </location>
</feature>
<organism>
    <name type="scientific">Burkholderia ambifaria (strain ATCC BAA-244 / DSM 16087 / CCUG 44356 / LMG 19182 / AMMD)</name>
    <name type="common">Burkholderia cepacia (strain AMMD)</name>
    <dbReference type="NCBI Taxonomy" id="339670"/>
    <lineage>
        <taxon>Bacteria</taxon>
        <taxon>Pseudomonadati</taxon>
        <taxon>Pseudomonadota</taxon>
        <taxon>Betaproteobacteria</taxon>
        <taxon>Burkholderiales</taxon>
        <taxon>Burkholderiaceae</taxon>
        <taxon>Burkholderia</taxon>
        <taxon>Burkholderia cepacia complex</taxon>
    </lineage>
</organism>
<gene>
    <name evidence="1" type="primary">ispF</name>
    <name type="ordered locus">Bamb_1930</name>
</gene>
<protein>
    <recommendedName>
        <fullName evidence="1">2-C-methyl-D-erythritol 2,4-cyclodiphosphate synthase</fullName>
        <shortName evidence="1">MECDP-synthase</shortName>
        <shortName evidence="1">MECPP-synthase</shortName>
        <shortName evidence="1">MECPS</shortName>
        <ecNumber evidence="1">4.6.1.12</ecNumber>
    </recommendedName>
</protein>